<reference key="1">
    <citation type="journal article" date="2005" name="Genome Res.">
        <title>Genome sequence of Blochmannia pennsylvanicus indicates parallel evolutionary trends among bacterial mutualists of insects.</title>
        <authorList>
            <person name="Degnan P.H."/>
            <person name="Lazarus A.B."/>
            <person name="Wernegreen J.J."/>
        </authorList>
    </citation>
    <scope>NUCLEOTIDE SEQUENCE [LARGE SCALE GENOMIC DNA]</scope>
    <source>
        <strain>BPEN</strain>
    </source>
</reference>
<protein>
    <recommendedName>
        <fullName evidence="1">Leucine--tRNA ligase</fullName>
        <ecNumber evidence="1">6.1.1.4</ecNumber>
    </recommendedName>
    <alternativeName>
        <fullName evidence="1">Leucyl-tRNA synthetase</fullName>
        <shortName evidence="1">LeuRS</shortName>
    </alternativeName>
</protein>
<evidence type="ECO:0000255" key="1">
    <source>
        <dbReference type="HAMAP-Rule" id="MF_00049"/>
    </source>
</evidence>
<organism>
    <name type="scientific">Blochmanniella pennsylvanica (strain BPEN)</name>
    <dbReference type="NCBI Taxonomy" id="291272"/>
    <lineage>
        <taxon>Bacteria</taxon>
        <taxon>Pseudomonadati</taxon>
        <taxon>Pseudomonadota</taxon>
        <taxon>Gammaproteobacteria</taxon>
        <taxon>Enterobacterales</taxon>
        <taxon>Enterobacteriaceae</taxon>
        <taxon>ant endosymbionts</taxon>
        <taxon>Candidatus Blochmanniella</taxon>
    </lineage>
</organism>
<proteinExistence type="inferred from homology"/>
<sequence>MRKSYSPSDIESVVQKHWYKNKTFAVIEDSNKEKYYCLSMIPYPSGNLHMGHVRNYTIGDVISRYQRMLGKNVLQPIGWDAFGLPAEHAAIKNNTDPSIWTYSNINYMKSQLQSLGFAYDWNRELITCHPDYYRWEQWFFTVLYKKGLVYKKTASVNWCSYHKTVLANEQVTNNCCWRCHTPVKYKRIPQWFIRITNYADQLLHGLDQLTHWPEQVKIMQRNWIGRSKGVNVTFRIENSNDTLTIYMTRLDIFMGITYLVISTDHPIALQVAKTDLNVAHFIQKNDDFYTKLNKKNVFYFEKMGMPTHIYAIHPITNSKLPIWVANFVIPMECDGMGAAISIPAHNQQDWEFAYKYNLPIKPVIKNLDAIEPNIAMQAQETTCDGILFNSGEFDGLSSCTASNAIVKSLIARGVAQYKVNYRLKDWGISRQRYWGVPIPMVTLSNGVVKPVLLDRLPVILPKNMSTIHRSNDGYVDNSLKMYPNWIQTTYKGQAAIRDTDTFDTFMESSWYYARYTCPRYNDAMLNVHAANYWLPVDQYIGGIEHAIMHLLYFRFYHKLMRDEGLVYSDEPAIRLLCQGMVLADSFYYVSPNGQHIWVDPTHVTIKRDRIGGIVKAIDKDGRDLIYDGMCKMSKSKNNGIDPNIIIEKYGADAVRFFIMFAAPIEAPLEWKESGIEGAQRFLKRIWNLIYHHIQDGPVDALSVVILNHAQKFIRYNVHKTIEKVTDDIDRRQSFNTALSAIMKLVKKLYNAPKTSMQDRAVLQEALLVIVRLLYPFTPHISFILWKALGGSEDIDNATWPIVDTQAIQNDRTLVLVQINGKMRHKVFAPLNSDKNVVYKLLETEGVLNKYLIGKKINNIIYVPNRVINIIAK</sequence>
<feature type="chain" id="PRO_1000009297" description="Leucine--tRNA ligase">
    <location>
        <begin position="1"/>
        <end position="872"/>
    </location>
</feature>
<feature type="short sequence motif" description="'HIGH' region">
    <location>
        <begin position="42"/>
        <end position="52"/>
    </location>
</feature>
<feature type="short sequence motif" description="'KMSKS' region">
    <location>
        <begin position="631"/>
        <end position="635"/>
    </location>
</feature>
<feature type="binding site" evidence="1">
    <location>
        <position position="634"/>
    </location>
    <ligand>
        <name>ATP</name>
        <dbReference type="ChEBI" id="CHEBI:30616"/>
    </ligand>
</feature>
<gene>
    <name evidence="1" type="primary">leuS</name>
    <name type="ordered locus">BPEN_321</name>
</gene>
<name>SYL_BLOPB</name>
<dbReference type="EC" id="6.1.1.4" evidence="1"/>
<dbReference type="EMBL" id="CP000016">
    <property type="protein sequence ID" value="AAZ40951.1"/>
    <property type="molecule type" value="Genomic_DNA"/>
</dbReference>
<dbReference type="RefSeq" id="WP_011282858.1">
    <property type="nucleotide sequence ID" value="NC_007292.1"/>
</dbReference>
<dbReference type="SMR" id="Q492Z3"/>
<dbReference type="STRING" id="291272.BPEN_321"/>
<dbReference type="KEGG" id="bpn:BPEN_321"/>
<dbReference type="eggNOG" id="COG0495">
    <property type="taxonomic scope" value="Bacteria"/>
</dbReference>
<dbReference type="HOGENOM" id="CLU_004427_0_0_6"/>
<dbReference type="OrthoDB" id="9810365at2"/>
<dbReference type="Proteomes" id="UP000007794">
    <property type="component" value="Chromosome"/>
</dbReference>
<dbReference type="GO" id="GO:0005829">
    <property type="term" value="C:cytosol"/>
    <property type="evidence" value="ECO:0007669"/>
    <property type="project" value="TreeGrafter"/>
</dbReference>
<dbReference type="GO" id="GO:0002161">
    <property type="term" value="F:aminoacyl-tRNA deacylase activity"/>
    <property type="evidence" value="ECO:0007669"/>
    <property type="project" value="InterPro"/>
</dbReference>
<dbReference type="GO" id="GO:0005524">
    <property type="term" value="F:ATP binding"/>
    <property type="evidence" value="ECO:0007669"/>
    <property type="project" value="UniProtKB-UniRule"/>
</dbReference>
<dbReference type="GO" id="GO:0004823">
    <property type="term" value="F:leucine-tRNA ligase activity"/>
    <property type="evidence" value="ECO:0007669"/>
    <property type="project" value="UniProtKB-UniRule"/>
</dbReference>
<dbReference type="GO" id="GO:0006429">
    <property type="term" value="P:leucyl-tRNA aminoacylation"/>
    <property type="evidence" value="ECO:0007669"/>
    <property type="project" value="UniProtKB-UniRule"/>
</dbReference>
<dbReference type="CDD" id="cd07958">
    <property type="entry name" value="Anticodon_Ia_Leu_BEm"/>
    <property type="match status" value="1"/>
</dbReference>
<dbReference type="CDD" id="cd00812">
    <property type="entry name" value="LeuRS_core"/>
    <property type="match status" value="1"/>
</dbReference>
<dbReference type="FunFam" id="1.10.730.10:FF:000003">
    <property type="entry name" value="Leucine--tRNA ligase"/>
    <property type="match status" value="1"/>
</dbReference>
<dbReference type="FunFam" id="2.20.28.290:FF:000001">
    <property type="entry name" value="Leucine--tRNA ligase"/>
    <property type="match status" value="1"/>
</dbReference>
<dbReference type="FunFam" id="3.40.50.620:FF:000003">
    <property type="entry name" value="Leucine--tRNA ligase"/>
    <property type="match status" value="1"/>
</dbReference>
<dbReference type="Gene3D" id="2.20.28.290">
    <property type="match status" value="1"/>
</dbReference>
<dbReference type="Gene3D" id="3.10.20.590">
    <property type="match status" value="1"/>
</dbReference>
<dbReference type="Gene3D" id="3.40.50.620">
    <property type="entry name" value="HUPs"/>
    <property type="match status" value="2"/>
</dbReference>
<dbReference type="Gene3D" id="1.10.730.10">
    <property type="entry name" value="Isoleucyl-tRNA Synthetase, Domain 1"/>
    <property type="match status" value="1"/>
</dbReference>
<dbReference type="HAMAP" id="MF_00049_B">
    <property type="entry name" value="Leu_tRNA_synth_B"/>
    <property type="match status" value="1"/>
</dbReference>
<dbReference type="InterPro" id="IPR001412">
    <property type="entry name" value="aa-tRNA-synth_I_CS"/>
</dbReference>
<dbReference type="InterPro" id="IPR002300">
    <property type="entry name" value="aa-tRNA-synth_Ia"/>
</dbReference>
<dbReference type="InterPro" id="IPR002302">
    <property type="entry name" value="Leu-tRNA-ligase"/>
</dbReference>
<dbReference type="InterPro" id="IPR025709">
    <property type="entry name" value="Leu_tRNA-synth_edit"/>
</dbReference>
<dbReference type="InterPro" id="IPR013155">
    <property type="entry name" value="M/V/L/I-tRNA-synth_anticd-bd"/>
</dbReference>
<dbReference type="InterPro" id="IPR015413">
    <property type="entry name" value="Methionyl/Leucyl_tRNA_Synth"/>
</dbReference>
<dbReference type="InterPro" id="IPR014729">
    <property type="entry name" value="Rossmann-like_a/b/a_fold"/>
</dbReference>
<dbReference type="InterPro" id="IPR009080">
    <property type="entry name" value="tRNAsynth_Ia_anticodon-bd"/>
</dbReference>
<dbReference type="InterPro" id="IPR009008">
    <property type="entry name" value="Val/Leu/Ile-tRNA-synth_edit"/>
</dbReference>
<dbReference type="NCBIfam" id="TIGR00396">
    <property type="entry name" value="leuS_bact"/>
    <property type="match status" value="1"/>
</dbReference>
<dbReference type="PANTHER" id="PTHR43740:SF2">
    <property type="entry name" value="LEUCINE--TRNA LIGASE, MITOCHONDRIAL"/>
    <property type="match status" value="1"/>
</dbReference>
<dbReference type="PANTHER" id="PTHR43740">
    <property type="entry name" value="LEUCYL-TRNA SYNTHETASE"/>
    <property type="match status" value="1"/>
</dbReference>
<dbReference type="Pfam" id="PF08264">
    <property type="entry name" value="Anticodon_1"/>
    <property type="match status" value="1"/>
</dbReference>
<dbReference type="Pfam" id="PF00133">
    <property type="entry name" value="tRNA-synt_1"/>
    <property type="match status" value="2"/>
</dbReference>
<dbReference type="Pfam" id="PF13603">
    <property type="entry name" value="tRNA-synt_1_2"/>
    <property type="match status" value="1"/>
</dbReference>
<dbReference type="Pfam" id="PF09334">
    <property type="entry name" value="tRNA-synt_1g"/>
    <property type="match status" value="1"/>
</dbReference>
<dbReference type="PRINTS" id="PR00985">
    <property type="entry name" value="TRNASYNTHLEU"/>
</dbReference>
<dbReference type="SUPFAM" id="SSF47323">
    <property type="entry name" value="Anticodon-binding domain of a subclass of class I aminoacyl-tRNA synthetases"/>
    <property type="match status" value="1"/>
</dbReference>
<dbReference type="SUPFAM" id="SSF52374">
    <property type="entry name" value="Nucleotidylyl transferase"/>
    <property type="match status" value="1"/>
</dbReference>
<dbReference type="SUPFAM" id="SSF50677">
    <property type="entry name" value="ValRS/IleRS/LeuRS editing domain"/>
    <property type="match status" value="1"/>
</dbReference>
<dbReference type="PROSITE" id="PS00178">
    <property type="entry name" value="AA_TRNA_LIGASE_I"/>
    <property type="match status" value="1"/>
</dbReference>
<accession>Q492Z3</accession>
<keyword id="KW-0030">Aminoacyl-tRNA synthetase</keyword>
<keyword id="KW-0067">ATP-binding</keyword>
<keyword id="KW-0963">Cytoplasm</keyword>
<keyword id="KW-0436">Ligase</keyword>
<keyword id="KW-0547">Nucleotide-binding</keyword>
<keyword id="KW-0648">Protein biosynthesis</keyword>
<keyword id="KW-1185">Reference proteome</keyword>
<comment type="catalytic activity">
    <reaction evidence="1">
        <text>tRNA(Leu) + L-leucine + ATP = L-leucyl-tRNA(Leu) + AMP + diphosphate</text>
        <dbReference type="Rhea" id="RHEA:11688"/>
        <dbReference type="Rhea" id="RHEA-COMP:9613"/>
        <dbReference type="Rhea" id="RHEA-COMP:9622"/>
        <dbReference type="ChEBI" id="CHEBI:30616"/>
        <dbReference type="ChEBI" id="CHEBI:33019"/>
        <dbReference type="ChEBI" id="CHEBI:57427"/>
        <dbReference type="ChEBI" id="CHEBI:78442"/>
        <dbReference type="ChEBI" id="CHEBI:78494"/>
        <dbReference type="ChEBI" id="CHEBI:456215"/>
        <dbReference type="EC" id="6.1.1.4"/>
    </reaction>
</comment>
<comment type="subcellular location">
    <subcellularLocation>
        <location evidence="1">Cytoplasm</location>
    </subcellularLocation>
</comment>
<comment type="similarity">
    <text evidence="1">Belongs to the class-I aminoacyl-tRNA synthetase family.</text>
</comment>